<organism>
    <name type="scientific">Homo sapiens</name>
    <name type="common">Human</name>
    <dbReference type="NCBI Taxonomy" id="9606"/>
    <lineage>
        <taxon>Eukaryota</taxon>
        <taxon>Metazoa</taxon>
        <taxon>Chordata</taxon>
        <taxon>Craniata</taxon>
        <taxon>Vertebrata</taxon>
        <taxon>Euteleostomi</taxon>
        <taxon>Mammalia</taxon>
        <taxon>Eutheria</taxon>
        <taxon>Euarchontoglires</taxon>
        <taxon>Primates</taxon>
        <taxon>Haplorrhini</taxon>
        <taxon>Catarrhini</taxon>
        <taxon>Hominidae</taxon>
        <taxon>Homo</taxon>
    </lineage>
</organism>
<evidence type="ECO:0000250" key="1"/>
<evidence type="ECO:0000250" key="2">
    <source>
        <dbReference type="UniProtKB" id="P04692"/>
    </source>
</evidence>
<evidence type="ECO:0000250" key="3">
    <source>
        <dbReference type="UniProtKB" id="P09495"/>
    </source>
</evidence>
<evidence type="ECO:0000256" key="4">
    <source>
        <dbReference type="SAM" id="MobiDB-lite"/>
    </source>
</evidence>
<evidence type="ECO:0000269" key="5">
    <source>
    </source>
</evidence>
<evidence type="ECO:0000269" key="6">
    <source>
    </source>
</evidence>
<evidence type="ECO:0000269" key="7">
    <source>
    </source>
</evidence>
<evidence type="ECO:0000269" key="8">
    <source>
    </source>
</evidence>
<evidence type="ECO:0000269" key="9">
    <source>
    </source>
</evidence>
<evidence type="ECO:0000269" key="10">
    <source>
    </source>
</evidence>
<evidence type="ECO:0000269" key="11">
    <source>
    </source>
</evidence>
<evidence type="ECO:0000269" key="12">
    <source ref="7"/>
</evidence>
<evidence type="ECO:0000303" key="13">
    <source>
    </source>
</evidence>
<evidence type="ECO:0000305" key="14"/>
<evidence type="ECO:0007744" key="15">
    <source>
    </source>
</evidence>
<evidence type="ECO:0007744" key="16">
    <source>
    </source>
</evidence>
<evidence type="ECO:0007744" key="17">
    <source>
    </source>
</evidence>
<evidence type="ECO:0007744" key="18">
    <source>
    </source>
</evidence>
<evidence type="ECO:0007744" key="19">
    <source>
    </source>
</evidence>
<feature type="initiator methionine" description="Removed" evidence="5 12 15 17 18">
    <location>
        <position position="1"/>
    </location>
</feature>
<feature type="chain" id="PRO_0000205635" description="Tropomyosin alpha-4 chain">
    <location>
        <begin position="2"/>
        <end position="248"/>
    </location>
</feature>
<feature type="region of interest" description="Disordered" evidence="4">
    <location>
        <begin position="15"/>
        <end position="47"/>
    </location>
</feature>
<feature type="coiled-coil region" evidence="1">
    <location>
        <begin position="2"/>
        <end position="248"/>
    </location>
</feature>
<feature type="compositionally biased region" description="Basic and acidic residues" evidence="4">
    <location>
        <begin position="33"/>
        <end position="47"/>
    </location>
</feature>
<feature type="modified residue" description="N-acetylalanine" evidence="12 15 17 18">
    <location>
        <position position="2"/>
    </location>
</feature>
<feature type="modified residue" description="Phosphoserine" evidence="3">
    <location>
        <position position="6"/>
    </location>
</feature>
<feature type="modified residue" description="N6-acetyllysine" evidence="16">
    <location>
        <position position="177"/>
    </location>
</feature>
<feature type="modified residue" description="N6-acetyllysine" evidence="16">
    <location>
        <position position="215"/>
    </location>
</feature>
<feature type="modified residue" description="Phosphothreonine" evidence="19">
    <location>
        <position position="216"/>
    </location>
</feature>
<feature type="splice variant" id="VSP_006611" description="In isoform 2." evidence="13">
    <original>MAGLNSLEAVKRKIQALQQQADEAEDRAQGLQRELDGERERREK</original>
    <variation>MEAIKKKMQMLKLDKENAIDRAEQAEADKKAAEDKCKQVEEELTHLQKKLKGTEDELDKYSEDLKDAQEKLELTEKKASD</variation>
    <location>
        <begin position="1"/>
        <end position="44"/>
    </location>
</feature>
<feature type="sequence variant" id="VAR_088974" description="In BDPLT25; likely pathogenic." evidence="9">
    <location>
        <begin position="69"/>
        <end position="248"/>
    </location>
</feature>
<feature type="sequence variant" id="VAR_088975" description="In BDPLT25; likely pathogenic; decreased protein abundance in patient platelets." evidence="11">
    <location>
        <begin position="108"/>
        <end position="248"/>
    </location>
</feature>
<feature type="sequence variant" id="VAR_088976" description="In BDPLT25; uncertain significance; dbSNP:rs752488156." evidence="10">
    <original>R</original>
    <variation>C</variation>
    <location>
        <position position="146"/>
    </location>
</feature>
<feature type="sequence variant" id="VAR_088977" description="In BDPLT25; uncertain significance; dbSNP:rs1229151800." evidence="8">
    <original>A</original>
    <variation>V</variation>
    <location>
        <position position="147"/>
    </location>
</feature>
<feature type="sequence variant" id="VAR_036535" description="In a breast cancer sample; somatic mutation." evidence="6">
    <original>E</original>
    <variation>Q</variation>
    <location>
        <position position="204"/>
    </location>
</feature>
<feature type="sequence conflict" description="In Ref. 5; AAH02827." evidence="14" ref="5">
    <original>V</original>
    <variation>F</variation>
    <location>
        <position position="59"/>
    </location>
</feature>
<feature type="sequence conflict" description="In Ref. 10; AAA36774." evidence="14" ref="10">
    <original>L</original>
    <variation>S</variation>
    <location>
        <position position="152"/>
    </location>
</feature>
<feature type="sequence conflict" description="In Ref. 10; AAA36774." evidence="14" ref="10">
    <original>KN</original>
    <variation>RT</variation>
    <location>
        <begin position="162"/>
        <end position="163"/>
    </location>
</feature>
<sequence>MAGLNSLEAVKRKIQALQQQADEAEDRAQGLQRELDGERERREKAEGDVAALNRRIQLVEEELDRAQERLATALQKLEEAEKAADESERGMKVIENRAMKDEEKMEIQEMQLKEAKHIAEEADRKYEEVARKLVILEGELERAEERAEVSELKCGDLEEELKNVTNNLKSLEAASEKYSEKEDKYEEEIKLLSDKLKEAETRAEFAERTVAKLEKTIDDLEEKLAQAKEENVGLHQTLDQTLNELNCI</sequence>
<dbReference type="EMBL" id="X05276">
    <property type="protein sequence ID" value="CAA28888.1"/>
    <property type="molecule type" value="mRNA"/>
</dbReference>
<dbReference type="EMBL" id="AK023385">
    <property type="protein sequence ID" value="BAB14554.1"/>
    <property type="molecule type" value="mRNA"/>
</dbReference>
<dbReference type="EMBL" id="AK315076">
    <property type="protein sequence ID" value="BAG37545.1"/>
    <property type="molecule type" value="mRNA"/>
</dbReference>
<dbReference type="EMBL" id="BT019634">
    <property type="protein sequence ID" value="AAV38440.1"/>
    <property type="molecule type" value="mRNA"/>
</dbReference>
<dbReference type="EMBL" id="CH471106">
    <property type="protein sequence ID" value="EAW84521.1"/>
    <property type="molecule type" value="Genomic_DNA"/>
</dbReference>
<dbReference type="EMBL" id="BC002827">
    <property type="protein sequence ID" value="AAH02827.1"/>
    <property type="molecule type" value="mRNA"/>
</dbReference>
<dbReference type="EMBL" id="BC037576">
    <property type="protein sequence ID" value="AAH37576.1"/>
    <property type="molecule type" value="mRNA"/>
</dbReference>
<dbReference type="EMBL" id="BC067225">
    <property type="protein sequence ID" value="AAH67225.1"/>
    <property type="molecule type" value="mRNA"/>
</dbReference>
<dbReference type="EMBL" id="M12127">
    <property type="protein sequence ID" value="AAA36774.1"/>
    <property type="molecule type" value="mRNA"/>
</dbReference>
<dbReference type="CCDS" id="CCDS12338.1"/>
<dbReference type="CCDS" id="CCDS46007.1">
    <molecule id="P67936-2"/>
</dbReference>
<dbReference type="PIR" id="S07282">
    <property type="entry name" value="S07282"/>
</dbReference>
<dbReference type="RefSeq" id="NP_001138632.1">
    <molecule id="P67936-2"/>
    <property type="nucleotide sequence ID" value="NM_001145160.2"/>
</dbReference>
<dbReference type="RefSeq" id="NP_003281.1">
    <molecule id="P67936-1"/>
    <property type="nucleotide sequence ID" value="NM_003290.3"/>
</dbReference>
<dbReference type="SMR" id="P67936"/>
<dbReference type="BioGRID" id="113024">
    <property type="interactions" value="287"/>
</dbReference>
<dbReference type="FunCoup" id="P67936">
    <property type="interactions" value="1164"/>
</dbReference>
<dbReference type="IntAct" id="P67936">
    <property type="interactions" value="116"/>
</dbReference>
<dbReference type="MINT" id="P67936"/>
<dbReference type="STRING" id="9606.ENSP00000494125"/>
<dbReference type="ChEMBL" id="CHEMBL4295789"/>
<dbReference type="DrugBank" id="DB12695">
    <property type="generic name" value="Phenethyl Isothiocyanate"/>
</dbReference>
<dbReference type="GlyGen" id="P67936">
    <property type="glycosylation" value="1 site, 1 O-linked glycan (1 site)"/>
</dbReference>
<dbReference type="iPTMnet" id="P67936"/>
<dbReference type="MetOSite" id="P67936"/>
<dbReference type="PhosphoSitePlus" id="P67936"/>
<dbReference type="SwissPalm" id="P67936"/>
<dbReference type="BioMuta" id="TPM4"/>
<dbReference type="DMDM" id="54039751"/>
<dbReference type="OGP" id="P07226"/>
<dbReference type="CPTAC" id="CPTAC-154"/>
<dbReference type="CPTAC" id="CPTAC-155"/>
<dbReference type="CPTAC" id="CPTAC-156"/>
<dbReference type="jPOST" id="P67936"/>
<dbReference type="MassIVE" id="P67936"/>
<dbReference type="PaxDb" id="9606-ENSP00000345230"/>
<dbReference type="PeptideAtlas" id="P67936"/>
<dbReference type="ProteomicsDB" id="57525"/>
<dbReference type="ProteomicsDB" id="57526">
    <molecule id="P67936-2"/>
</dbReference>
<dbReference type="Antibodypedia" id="27276">
    <property type="antibodies" value="170 antibodies from 28 providers"/>
</dbReference>
<dbReference type="DNASU" id="7171"/>
<dbReference type="Ensembl" id="ENST00000643579.2">
    <molecule id="P67936-1"/>
    <property type="protein sequence ID" value="ENSP00000495347.1"/>
    <property type="gene ID" value="ENSG00000167460.18"/>
</dbReference>
<dbReference type="Ensembl" id="ENST00000646974.2">
    <molecule id="P67936-2"/>
    <property type="protein sequence ID" value="ENSP00000494125.1"/>
    <property type="gene ID" value="ENSG00000167460.18"/>
</dbReference>
<dbReference type="GeneID" id="7171"/>
<dbReference type="KEGG" id="hsa:7171"/>
<dbReference type="MANE-Select" id="ENST00000643579.2">
    <property type="protein sequence ID" value="ENSP00000495347.1"/>
    <property type="RefSeq nucleotide sequence ID" value="NM_003290.3"/>
    <property type="RefSeq protein sequence ID" value="NP_003281.1"/>
</dbReference>
<dbReference type="UCSC" id="uc002ndi.3">
    <property type="organism name" value="human"/>
</dbReference>
<dbReference type="AGR" id="HGNC:12013"/>
<dbReference type="CTD" id="7171"/>
<dbReference type="DisGeNET" id="7171"/>
<dbReference type="GeneCards" id="TPM4"/>
<dbReference type="HGNC" id="HGNC:12013">
    <property type="gene designation" value="TPM4"/>
</dbReference>
<dbReference type="HPA" id="ENSG00000167460">
    <property type="expression patterns" value="Low tissue specificity"/>
</dbReference>
<dbReference type="MalaCards" id="TPM4"/>
<dbReference type="MIM" id="600317">
    <property type="type" value="gene"/>
</dbReference>
<dbReference type="MIM" id="620486">
    <property type="type" value="phenotype"/>
</dbReference>
<dbReference type="neXtProt" id="NX_P67936"/>
<dbReference type="OpenTargets" id="ENSG00000167460"/>
<dbReference type="Orphanet" id="140957">
    <property type="disease" value="Autosomal dominant macrothrombocytopenia"/>
</dbReference>
<dbReference type="Orphanet" id="178342">
    <property type="disease" value="Inflammatory myofibroblastic tumor"/>
</dbReference>
<dbReference type="PharmGKB" id="PA36693"/>
<dbReference type="VEuPathDB" id="HostDB:ENSG00000167460"/>
<dbReference type="GeneTree" id="ENSGT01030000234542"/>
<dbReference type="HOGENOM" id="CLU_055027_0_0_1"/>
<dbReference type="InParanoid" id="P67936"/>
<dbReference type="OMA" id="MDKREDY"/>
<dbReference type="OrthoDB" id="128924at2759"/>
<dbReference type="PAN-GO" id="P67936">
    <property type="GO annotations" value="4 GO annotations based on evolutionary models"/>
</dbReference>
<dbReference type="PhylomeDB" id="P67936"/>
<dbReference type="TreeFam" id="TF351519"/>
<dbReference type="PathwayCommons" id="P67936"/>
<dbReference type="Reactome" id="R-HSA-390522">
    <property type="pathway name" value="Striated Muscle Contraction"/>
</dbReference>
<dbReference type="Reactome" id="R-HSA-445355">
    <property type="pathway name" value="Smooth Muscle Contraction"/>
</dbReference>
<dbReference type="Reactome" id="R-HSA-9013424">
    <property type="pathway name" value="RHOV GTPase cycle"/>
</dbReference>
<dbReference type="Reactome" id="R-HSA-9725370">
    <property type="pathway name" value="Signaling by ALK fusions and activated point mutants"/>
</dbReference>
<dbReference type="SignaLink" id="P67936"/>
<dbReference type="SIGNOR" id="P67936"/>
<dbReference type="BioGRID-ORCS" id="7171">
    <property type="hits" value="42 hits in 1148 CRISPR screens"/>
</dbReference>
<dbReference type="ChiTaRS" id="TPM4">
    <property type="organism name" value="human"/>
</dbReference>
<dbReference type="GeneWiki" id="TPM4"/>
<dbReference type="GenomeRNAi" id="7171"/>
<dbReference type="Pharos" id="P67936">
    <property type="development level" value="Tbio"/>
</dbReference>
<dbReference type="PRO" id="PR:P67936"/>
<dbReference type="Proteomes" id="UP000005640">
    <property type="component" value="Chromosome 19"/>
</dbReference>
<dbReference type="RNAct" id="P67936">
    <property type="molecule type" value="protein"/>
</dbReference>
<dbReference type="Bgee" id="ENSG00000167460">
    <property type="expression patterns" value="Expressed in tendon of biceps brachii and 195 other cell types or tissues"/>
</dbReference>
<dbReference type="ExpressionAtlas" id="P67936">
    <property type="expression patterns" value="baseline and differential"/>
</dbReference>
<dbReference type="GO" id="GO:0005884">
    <property type="term" value="C:actin filament"/>
    <property type="evidence" value="ECO:0000318"/>
    <property type="project" value="GO_Central"/>
</dbReference>
<dbReference type="GO" id="GO:0030863">
    <property type="term" value="C:cortical cytoskeleton"/>
    <property type="evidence" value="ECO:0007669"/>
    <property type="project" value="Ensembl"/>
</dbReference>
<dbReference type="GO" id="GO:0005856">
    <property type="term" value="C:cytoskeleton"/>
    <property type="evidence" value="ECO:0000304"/>
    <property type="project" value="UniProtKB"/>
</dbReference>
<dbReference type="GO" id="GO:0005829">
    <property type="term" value="C:cytosol"/>
    <property type="evidence" value="ECO:0000304"/>
    <property type="project" value="Reactome"/>
</dbReference>
<dbReference type="GO" id="GO:0070062">
    <property type="term" value="C:extracellular exosome"/>
    <property type="evidence" value="ECO:0007005"/>
    <property type="project" value="UniProtKB"/>
</dbReference>
<dbReference type="GO" id="GO:0005925">
    <property type="term" value="C:focal adhesion"/>
    <property type="evidence" value="ECO:0007005"/>
    <property type="project" value="UniProtKB"/>
</dbReference>
<dbReference type="GO" id="GO:0016020">
    <property type="term" value="C:membrane"/>
    <property type="evidence" value="ECO:0007005"/>
    <property type="project" value="UniProtKB"/>
</dbReference>
<dbReference type="GO" id="GO:0005862">
    <property type="term" value="C:muscle thin filament tropomyosin"/>
    <property type="evidence" value="ECO:0000304"/>
    <property type="project" value="ProtInc"/>
</dbReference>
<dbReference type="GO" id="GO:0002102">
    <property type="term" value="C:podosome"/>
    <property type="evidence" value="ECO:0007669"/>
    <property type="project" value="Ensembl"/>
</dbReference>
<dbReference type="GO" id="GO:0001725">
    <property type="term" value="C:stress fiber"/>
    <property type="evidence" value="ECO:0000314"/>
    <property type="project" value="MGI"/>
</dbReference>
<dbReference type="GO" id="GO:0051015">
    <property type="term" value="F:actin filament binding"/>
    <property type="evidence" value="ECO:0000250"/>
    <property type="project" value="UniProtKB"/>
</dbReference>
<dbReference type="GO" id="GO:0005509">
    <property type="term" value="F:calcium ion binding"/>
    <property type="evidence" value="ECO:0000303"/>
    <property type="project" value="UniProtKB"/>
</dbReference>
<dbReference type="GO" id="GO:0042802">
    <property type="term" value="F:identical protein binding"/>
    <property type="evidence" value="ECO:0000250"/>
    <property type="project" value="UniProtKB"/>
</dbReference>
<dbReference type="GO" id="GO:0046982">
    <property type="term" value="F:protein heterodimerization activity"/>
    <property type="evidence" value="ECO:0000250"/>
    <property type="project" value="UniProtKB"/>
</dbReference>
<dbReference type="GO" id="GO:0042803">
    <property type="term" value="F:protein homodimerization activity"/>
    <property type="evidence" value="ECO:0000250"/>
    <property type="project" value="UniProtKB"/>
</dbReference>
<dbReference type="GO" id="GO:0008307">
    <property type="term" value="F:structural constituent of muscle"/>
    <property type="evidence" value="ECO:0000304"/>
    <property type="project" value="ProtInc"/>
</dbReference>
<dbReference type="GO" id="GO:0007015">
    <property type="term" value="P:actin filament organization"/>
    <property type="evidence" value="ECO:0000318"/>
    <property type="project" value="GO_Central"/>
</dbReference>
<dbReference type="GO" id="GO:0006936">
    <property type="term" value="P:muscle contraction"/>
    <property type="evidence" value="ECO:0000318"/>
    <property type="project" value="GO_Central"/>
</dbReference>
<dbReference type="GO" id="GO:0001649">
    <property type="term" value="P:osteoblast differentiation"/>
    <property type="evidence" value="ECO:0007005"/>
    <property type="project" value="UniProtKB"/>
</dbReference>
<dbReference type="GO" id="GO:0030220">
    <property type="term" value="P:platelet formation"/>
    <property type="evidence" value="ECO:0000315"/>
    <property type="project" value="UniProtKB"/>
</dbReference>
<dbReference type="FunFam" id="1.20.5.170:FF:000001">
    <property type="entry name" value="Tropomyosin alpha-1 chain isoform 1"/>
    <property type="match status" value="1"/>
</dbReference>
<dbReference type="FunFam" id="1.20.5.340:FF:000001">
    <property type="entry name" value="Tropomyosin alpha-1 chain isoform 2"/>
    <property type="match status" value="1"/>
</dbReference>
<dbReference type="FunFam" id="1.20.5.370:FF:000004">
    <property type="entry name" value="tropomyosin alpha-1 chain isoform X1"/>
    <property type="match status" value="1"/>
</dbReference>
<dbReference type="Gene3D" id="1.20.5.170">
    <property type="match status" value="1"/>
</dbReference>
<dbReference type="Gene3D" id="1.20.5.370">
    <property type="match status" value="1"/>
</dbReference>
<dbReference type="InterPro" id="IPR000533">
    <property type="entry name" value="Tropomyosin"/>
</dbReference>
<dbReference type="InterPro" id="IPR014751">
    <property type="entry name" value="XRCC4-like_C"/>
</dbReference>
<dbReference type="PANTHER" id="PTHR19269">
    <property type="entry name" value="TROPOMYOSIN"/>
    <property type="match status" value="1"/>
</dbReference>
<dbReference type="Pfam" id="PF00261">
    <property type="entry name" value="Tropomyosin"/>
    <property type="match status" value="1"/>
</dbReference>
<dbReference type="PRINTS" id="PR00194">
    <property type="entry name" value="TROPOMYOSIN"/>
</dbReference>
<dbReference type="SUPFAM" id="SSF57997">
    <property type="entry name" value="Tropomyosin"/>
    <property type="match status" value="1"/>
</dbReference>
<dbReference type="PROSITE" id="PS00326">
    <property type="entry name" value="TROPOMYOSIN"/>
    <property type="match status" value="1"/>
</dbReference>
<name>TPM4_HUMAN</name>
<keyword id="KW-0007">Acetylation</keyword>
<keyword id="KW-0009">Actin-binding</keyword>
<keyword id="KW-0025">Alternative splicing</keyword>
<keyword id="KW-0106">Calcium</keyword>
<keyword id="KW-0175">Coiled coil</keyword>
<keyword id="KW-0963">Cytoplasm</keyword>
<keyword id="KW-0206">Cytoskeleton</keyword>
<keyword id="KW-0903">Direct protein sequencing</keyword>
<keyword id="KW-0225">Disease variant</keyword>
<keyword id="KW-0479">Metal-binding</keyword>
<keyword id="KW-0514">Muscle protein</keyword>
<keyword id="KW-0597">Phosphoprotein</keyword>
<keyword id="KW-1267">Proteomics identification</keyword>
<keyword id="KW-1185">Reference proteome</keyword>
<reference key="1">
    <citation type="journal article" date="1987" name="J. Mol. Biol.">
        <title>Characterization of a cDNA defining a gene family encoding TM30p1, a human fibroblast tropomyosin.</title>
        <authorList>
            <person name="McLeod A.R."/>
            <person name="Talbot K."/>
            <person name="Smillie L.B."/>
            <person name="Houlker C."/>
        </authorList>
    </citation>
    <scope>NUCLEOTIDE SEQUENCE [MRNA] (ISOFORM 1)</scope>
    <source>
        <tissue>Fibroblast</tissue>
    </source>
</reference>
<reference key="2">
    <citation type="journal article" date="2004" name="Nat. Genet.">
        <title>Complete sequencing and characterization of 21,243 full-length human cDNAs.</title>
        <authorList>
            <person name="Ota T."/>
            <person name="Suzuki Y."/>
            <person name="Nishikawa T."/>
            <person name="Otsuki T."/>
            <person name="Sugiyama T."/>
            <person name="Irie R."/>
            <person name="Wakamatsu A."/>
            <person name="Hayashi K."/>
            <person name="Sato H."/>
            <person name="Nagai K."/>
            <person name="Kimura K."/>
            <person name="Makita H."/>
            <person name="Sekine M."/>
            <person name="Obayashi M."/>
            <person name="Nishi T."/>
            <person name="Shibahara T."/>
            <person name="Tanaka T."/>
            <person name="Ishii S."/>
            <person name="Yamamoto J."/>
            <person name="Saito K."/>
            <person name="Kawai Y."/>
            <person name="Isono Y."/>
            <person name="Nakamura Y."/>
            <person name="Nagahari K."/>
            <person name="Murakami K."/>
            <person name="Yasuda T."/>
            <person name="Iwayanagi T."/>
            <person name="Wagatsuma M."/>
            <person name="Shiratori A."/>
            <person name="Sudo H."/>
            <person name="Hosoiri T."/>
            <person name="Kaku Y."/>
            <person name="Kodaira H."/>
            <person name="Kondo H."/>
            <person name="Sugawara M."/>
            <person name="Takahashi M."/>
            <person name="Kanda K."/>
            <person name="Yokoi T."/>
            <person name="Furuya T."/>
            <person name="Kikkawa E."/>
            <person name="Omura Y."/>
            <person name="Abe K."/>
            <person name="Kamihara K."/>
            <person name="Katsuta N."/>
            <person name="Sato K."/>
            <person name="Tanikawa M."/>
            <person name="Yamazaki M."/>
            <person name="Ninomiya K."/>
            <person name="Ishibashi T."/>
            <person name="Yamashita H."/>
            <person name="Murakawa K."/>
            <person name="Fujimori K."/>
            <person name="Tanai H."/>
            <person name="Kimata M."/>
            <person name="Watanabe M."/>
            <person name="Hiraoka S."/>
            <person name="Chiba Y."/>
            <person name="Ishida S."/>
            <person name="Ono Y."/>
            <person name="Takiguchi S."/>
            <person name="Watanabe S."/>
            <person name="Yosida M."/>
            <person name="Hotuta T."/>
            <person name="Kusano J."/>
            <person name="Kanehori K."/>
            <person name="Takahashi-Fujii A."/>
            <person name="Hara H."/>
            <person name="Tanase T.-O."/>
            <person name="Nomura Y."/>
            <person name="Togiya S."/>
            <person name="Komai F."/>
            <person name="Hara R."/>
            <person name="Takeuchi K."/>
            <person name="Arita M."/>
            <person name="Imose N."/>
            <person name="Musashino K."/>
            <person name="Yuuki H."/>
            <person name="Oshima A."/>
            <person name="Sasaki N."/>
            <person name="Aotsuka S."/>
            <person name="Yoshikawa Y."/>
            <person name="Matsunawa H."/>
            <person name="Ichihara T."/>
            <person name="Shiohata N."/>
            <person name="Sano S."/>
            <person name="Moriya S."/>
            <person name="Momiyama H."/>
            <person name="Satoh N."/>
            <person name="Takami S."/>
            <person name="Terashima Y."/>
            <person name="Suzuki O."/>
            <person name="Nakagawa S."/>
            <person name="Senoh A."/>
            <person name="Mizoguchi H."/>
            <person name="Goto Y."/>
            <person name="Shimizu F."/>
            <person name="Wakebe H."/>
            <person name="Hishigaki H."/>
            <person name="Watanabe T."/>
            <person name="Sugiyama A."/>
            <person name="Takemoto M."/>
            <person name="Kawakami B."/>
            <person name="Yamazaki M."/>
            <person name="Watanabe K."/>
            <person name="Kumagai A."/>
            <person name="Itakura S."/>
            <person name="Fukuzumi Y."/>
            <person name="Fujimori Y."/>
            <person name="Komiyama M."/>
            <person name="Tashiro H."/>
            <person name="Tanigami A."/>
            <person name="Fujiwara T."/>
            <person name="Ono T."/>
            <person name="Yamada K."/>
            <person name="Fujii Y."/>
            <person name="Ozaki K."/>
            <person name="Hirao M."/>
            <person name="Ohmori Y."/>
            <person name="Kawabata A."/>
            <person name="Hikiji T."/>
            <person name="Kobatake N."/>
            <person name="Inagaki H."/>
            <person name="Ikema Y."/>
            <person name="Okamoto S."/>
            <person name="Okitani R."/>
            <person name="Kawakami T."/>
            <person name="Noguchi S."/>
            <person name="Itoh T."/>
            <person name="Shigeta K."/>
            <person name="Senba T."/>
            <person name="Matsumura K."/>
            <person name="Nakajima Y."/>
            <person name="Mizuno T."/>
            <person name="Morinaga M."/>
            <person name="Sasaki M."/>
            <person name="Togashi T."/>
            <person name="Oyama M."/>
            <person name="Hata H."/>
            <person name="Watanabe M."/>
            <person name="Komatsu T."/>
            <person name="Mizushima-Sugano J."/>
            <person name="Satoh T."/>
            <person name="Shirai Y."/>
            <person name="Takahashi Y."/>
            <person name="Nakagawa K."/>
            <person name="Okumura K."/>
            <person name="Nagase T."/>
            <person name="Nomura N."/>
            <person name="Kikuchi H."/>
            <person name="Masuho Y."/>
            <person name="Yamashita R."/>
            <person name="Nakai K."/>
            <person name="Yada T."/>
            <person name="Nakamura Y."/>
            <person name="Ohara O."/>
            <person name="Isogai T."/>
            <person name="Sugano S."/>
        </authorList>
    </citation>
    <scope>NUCLEOTIDE SEQUENCE [LARGE SCALE MRNA] (ISOFORMS 1 AND 2)</scope>
    <source>
        <tissue>Ovarian carcinoma</tissue>
        <tissue>Tongue</tissue>
    </source>
</reference>
<reference key="3">
    <citation type="submission" date="2004-10" db="EMBL/GenBank/DDBJ databases">
        <title>Cloning of human full-length CDSs in BD Creator(TM) system donor vector.</title>
        <authorList>
            <person name="Kalnine N."/>
            <person name="Chen X."/>
            <person name="Rolfs A."/>
            <person name="Halleck A."/>
            <person name="Hines L."/>
            <person name="Eisenstein S."/>
            <person name="Koundinya M."/>
            <person name="Raphael J."/>
            <person name="Moreira D."/>
            <person name="Kelley T."/>
            <person name="LaBaer J."/>
            <person name="Lin Y."/>
            <person name="Phelan M."/>
            <person name="Farmer A."/>
        </authorList>
    </citation>
    <scope>NUCLEOTIDE SEQUENCE [LARGE SCALE MRNA] (ISOFORM 1)</scope>
</reference>
<reference key="4">
    <citation type="submission" date="2005-07" db="EMBL/GenBank/DDBJ databases">
        <authorList>
            <person name="Mural R.J."/>
            <person name="Istrail S."/>
            <person name="Sutton G.G."/>
            <person name="Florea L."/>
            <person name="Halpern A.L."/>
            <person name="Mobarry C.M."/>
            <person name="Lippert R."/>
            <person name="Walenz B."/>
            <person name="Shatkay H."/>
            <person name="Dew I."/>
            <person name="Miller J.R."/>
            <person name="Flanigan M.J."/>
            <person name="Edwards N.J."/>
            <person name="Bolanos R."/>
            <person name="Fasulo D."/>
            <person name="Halldorsson B.V."/>
            <person name="Hannenhalli S."/>
            <person name="Turner R."/>
            <person name="Yooseph S."/>
            <person name="Lu F."/>
            <person name="Nusskern D.R."/>
            <person name="Shue B.C."/>
            <person name="Zheng X.H."/>
            <person name="Zhong F."/>
            <person name="Delcher A.L."/>
            <person name="Huson D.H."/>
            <person name="Kravitz S.A."/>
            <person name="Mouchard L."/>
            <person name="Reinert K."/>
            <person name="Remington K.A."/>
            <person name="Clark A.G."/>
            <person name="Waterman M.S."/>
            <person name="Eichler E.E."/>
            <person name="Adams M.D."/>
            <person name="Hunkapiller M.W."/>
            <person name="Myers E.W."/>
            <person name="Venter J.C."/>
        </authorList>
    </citation>
    <scope>NUCLEOTIDE SEQUENCE [LARGE SCALE GENOMIC DNA]</scope>
</reference>
<reference key="5">
    <citation type="journal article" date="2004" name="Genome Res.">
        <title>The status, quality, and expansion of the NIH full-length cDNA project: the Mammalian Gene Collection (MGC).</title>
        <authorList>
            <consortium name="The MGC Project Team"/>
        </authorList>
    </citation>
    <scope>NUCLEOTIDE SEQUENCE [LARGE SCALE MRNA] (ISOFORM 1)</scope>
    <source>
        <tissue>Eye</tissue>
        <tissue>Placenta</tissue>
        <tissue>Testis</tissue>
    </source>
</reference>
<reference key="6">
    <citation type="journal article" date="2003" name="Nat. Biotechnol.">
        <title>Exploring proteomes and analyzing protein processing by mass spectrometric identification of sorted N-terminal peptides.</title>
        <authorList>
            <person name="Gevaert K."/>
            <person name="Goethals M."/>
            <person name="Martens L."/>
            <person name="Van Damme J."/>
            <person name="Staes A."/>
            <person name="Thomas G.R."/>
            <person name="Vandekerckhove J."/>
        </authorList>
    </citation>
    <scope>PROTEIN SEQUENCE OF 2-12</scope>
    <source>
        <tissue>Platelet</tissue>
    </source>
</reference>
<reference key="7">
    <citation type="submission" date="2005-11" db="UniProtKB">
        <authorList>
            <person name="Bienvenut W.V."/>
            <person name="Claeys D."/>
        </authorList>
    </citation>
    <scope>PROTEIN SEQUENCE OF 2-11; 45-54; 56-69; 77-89; 133-146 AND 216-223</scope>
    <scope>CLEAVAGE OF INITIATOR METHIONINE</scope>
    <scope>ACETYLATION AT ALA-2</scope>
    <scope>IDENTIFICATION BY MASS SPECTROMETRY</scope>
    <source>
        <tissue>Platelet</tissue>
    </source>
</reference>
<reference key="8">
    <citation type="journal article" date="1991" name="Eur. J. Clin. Invest.">
        <title>The calcium binding protein tropomyosin in human platelets and cardiac tissue: elevation in hypertensive cardiac hypertrophy.</title>
        <authorList>
            <person name="Crabos M."/>
            <person name="Yamakado T."/>
            <person name="Heizmann C.W."/>
            <person name="Cerletti N."/>
            <person name="Buehler F.R."/>
            <person name="Erne P."/>
        </authorList>
    </citation>
    <scope>PROTEIN SEQUENCE OF 9-31; 44-61; 89-95; 205-214 AND 231-243 (ISOFORM 1)</scope>
    <scope>FUNCTION</scope>
    <scope>TISSUE SPECIFICITY</scope>
    <source>
        <tissue>Platelet</tissue>
    </source>
</reference>
<reference key="9">
    <citation type="submission" date="2008-12" db="UniProtKB">
        <authorList>
            <person name="Lubec G."/>
            <person name="Afjehi-Sadat L."/>
            <person name="Chen W.-Q."/>
            <person name="Sun Y."/>
        </authorList>
    </citation>
    <scope>PROTEIN SEQUENCE OF 13-27; 45-82; 132-142; 154-169 AND 216-228</scope>
    <scope>IDENTIFICATION BY MASS SPECTROMETRY</scope>
    <source>
        <tissue>Brain</tissue>
        <tissue>Cajal-Retzius cell</tissue>
        <tissue>Fetal brain cortex</tissue>
    </source>
</reference>
<reference key="10">
    <citation type="journal article" date="1985" name="Proc. Natl. Acad. Sci. U.S.A.">
        <title>A muscle-type tropomyosin in human fibroblasts: evidence for expression by an alternative RNA splicing mechanism.</title>
        <authorList>
            <person name="MacLeod A.R."/>
            <person name="Houlker C."/>
            <person name="Reinach F.C."/>
            <person name="Smillie L.B."/>
            <person name="Talbot K."/>
            <person name="Modi G."/>
            <person name="Walsh F.S."/>
        </authorList>
    </citation>
    <scope>NUCLEOTIDE SEQUENCE [MRNA] OF 118-248</scope>
    <source>
        <tissue>Fibroblast</tissue>
    </source>
</reference>
<reference key="11">
    <citation type="journal article" date="1992" name="Electrophoresis">
        <title>Microsequences of 145 proteins recorded in the two-dimensional gel protein database of normal human epidermal keratinocytes.</title>
        <authorList>
            <person name="Rasmussen H.H."/>
            <person name="van Damme J."/>
            <person name="Puype M."/>
            <person name="Gesser B."/>
            <person name="Celis J.E."/>
            <person name="Vandekerckhove J."/>
        </authorList>
    </citation>
    <scope>PROTEIN SEQUENCE OF 177-189 AND 228-247</scope>
    <source>
        <tissue>Keratinocyte</tissue>
    </source>
</reference>
<reference key="12">
    <citation type="journal article" date="2009" name="Anal. Chem.">
        <title>Lys-N and trypsin cover complementary parts of the phosphoproteome in a refined SCX-based approach.</title>
        <authorList>
            <person name="Gauci S."/>
            <person name="Helbig A.O."/>
            <person name="Slijper M."/>
            <person name="Krijgsveld J."/>
            <person name="Heck A.J."/>
            <person name="Mohammed S."/>
        </authorList>
    </citation>
    <scope>ACETYLATION [LARGE SCALE ANALYSIS] AT ALA-2</scope>
    <scope>CLEAVAGE OF INITIATOR METHIONINE [LARGE SCALE ANALYSIS]</scope>
    <scope>IDENTIFICATION BY MASS SPECTROMETRY [LARGE SCALE ANALYSIS]</scope>
</reference>
<reference key="13">
    <citation type="journal article" date="2009" name="Science">
        <title>Lysine acetylation targets protein complexes and co-regulates major cellular functions.</title>
        <authorList>
            <person name="Choudhary C."/>
            <person name="Kumar C."/>
            <person name="Gnad F."/>
            <person name="Nielsen M.L."/>
            <person name="Rehman M."/>
            <person name="Walther T.C."/>
            <person name="Olsen J.V."/>
            <person name="Mann M."/>
        </authorList>
    </citation>
    <scope>ACETYLATION [LARGE SCALE ANALYSIS] AT LYS-177 AND LYS-215</scope>
    <scope>IDENTIFICATION BY MASS SPECTROMETRY [LARGE SCALE ANALYSIS]</scope>
</reference>
<reference key="14">
    <citation type="journal article" date="2011" name="BMC Syst. Biol.">
        <title>Initial characterization of the human central proteome.</title>
        <authorList>
            <person name="Burkard T.R."/>
            <person name="Planyavsky M."/>
            <person name="Kaupe I."/>
            <person name="Breitwieser F.P."/>
            <person name="Buerckstuemmer T."/>
            <person name="Bennett K.L."/>
            <person name="Superti-Furga G."/>
            <person name="Colinge J."/>
        </authorList>
    </citation>
    <scope>IDENTIFICATION BY MASS SPECTROMETRY [LARGE SCALE ANALYSIS]</scope>
</reference>
<reference key="15">
    <citation type="journal article" date="2012" name="Mol. Cell. Proteomics">
        <title>Comparative large-scale characterisation of plant vs. mammal proteins reveals similar and idiosyncratic N-alpha acetylation features.</title>
        <authorList>
            <person name="Bienvenut W.V."/>
            <person name="Sumpton D."/>
            <person name="Martinez A."/>
            <person name="Lilla S."/>
            <person name="Espagne C."/>
            <person name="Meinnel T."/>
            <person name="Giglione C."/>
        </authorList>
    </citation>
    <scope>ACETYLATION [LARGE SCALE ANALYSIS] AT ALA-2</scope>
    <scope>CLEAVAGE OF INITIATOR METHIONINE [LARGE SCALE ANALYSIS]</scope>
    <scope>IDENTIFICATION BY MASS SPECTROMETRY [LARGE SCALE ANALYSIS]</scope>
</reference>
<reference key="16">
    <citation type="journal article" date="2012" name="Proc. Natl. Acad. Sci. U.S.A.">
        <title>N-terminal acetylome analyses and functional insights of the N-terminal acetyltransferase NatB.</title>
        <authorList>
            <person name="Van Damme P."/>
            <person name="Lasa M."/>
            <person name="Polevoda B."/>
            <person name="Gazquez C."/>
            <person name="Elosegui-Artola A."/>
            <person name="Kim D.S."/>
            <person name="De Juan-Pardo E."/>
            <person name="Demeyer K."/>
            <person name="Hole K."/>
            <person name="Larrea E."/>
            <person name="Timmerman E."/>
            <person name="Prieto J."/>
            <person name="Arnesen T."/>
            <person name="Sherman F."/>
            <person name="Gevaert K."/>
            <person name="Aldabe R."/>
        </authorList>
    </citation>
    <scope>ACETYLATION [LARGE SCALE ANALYSIS] AT ALA-2</scope>
    <scope>CLEAVAGE OF INITIATOR METHIONINE [LARGE SCALE ANALYSIS]</scope>
    <scope>IDENTIFICATION BY MASS SPECTROMETRY [LARGE SCALE ANALYSIS]</scope>
</reference>
<reference key="17">
    <citation type="journal article" date="2013" name="J. Proteome Res.">
        <title>Toward a comprehensive characterization of a human cancer cell phosphoproteome.</title>
        <authorList>
            <person name="Zhou H."/>
            <person name="Di Palma S."/>
            <person name="Preisinger C."/>
            <person name="Peng M."/>
            <person name="Polat A.N."/>
            <person name="Heck A.J."/>
            <person name="Mohammed S."/>
        </authorList>
    </citation>
    <scope>PHOSPHORYLATION [LARGE SCALE ANALYSIS] AT THR-216</scope>
    <scope>IDENTIFICATION BY MASS SPECTROMETRY [LARGE SCALE ANALYSIS]</scope>
    <source>
        <tissue>Cervix carcinoma</tissue>
    </source>
</reference>
<reference key="18">
    <citation type="journal article" date="2014" name="J. Proteomics">
        <title>An enzyme assisted RP-RPLC approach for in-depth analysis of human liver phosphoproteome.</title>
        <authorList>
            <person name="Bian Y."/>
            <person name="Song C."/>
            <person name="Cheng K."/>
            <person name="Dong M."/>
            <person name="Wang F."/>
            <person name="Huang J."/>
            <person name="Sun D."/>
            <person name="Wang L."/>
            <person name="Ye M."/>
            <person name="Zou H."/>
        </authorList>
    </citation>
    <scope>IDENTIFICATION BY MASS SPECTROMETRY [LARGE SCALE ANALYSIS]</scope>
    <source>
        <tissue>Liver</tissue>
    </source>
</reference>
<reference key="19">
    <citation type="journal article" date="2017" name="J. Clin. Invest.">
        <title>Mutations in tropomyosin 4 underlie a rare form of human macrothrombocytopenia.</title>
        <authorList>
            <person name="Pleines I."/>
            <person name="Woods J."/>
            <person name="Chappaz S."/>
            <person name="Kew V."/>
            <person name="Foad N."/>
            <person name="Ballester-Beltran J."/>
            <person name="Aurbach K."/>
            <person name="Lincetto C."/>
            <person name="Lane R.M."/>
            <person name="Schevzov G."/>
            <person name="Alexander W.S."/>
            <person name="Hilton D.J."/>
            <person name="Astle W.J."/>
            <person name="Downes K."/>
            <person name="Nurden P."/>
            <person name="Westbury S.K."/>
            <person name="Mumford A.D."/>
            <person name="Obaji S.G."/>
            <person name="Collins P.W."/>
            <person name="Delerue F."/>
            <person name="Ittner L.M."/>
            <person name="Bryce N.S."/>
            <person name="Holliday M."/>
            <person name="Lucas C.A."/>
            <person name="Hardeman E.C."/>
            <person name="Ouwehand W.H."/>
            <person name="Gunning P.W."/>
            <person name="Turro E."/>
            <person name="Tijssen M.R."/>
            <person name="Kile B.T."/>
        </authorList>
    </citation>
    <scope>INVOLVEMENT IN BDPLT25</scope>
    <scope>VARIANT BDPLT25 69-ARG--ILE-248 DEL</scope>
    <scope>FUNCTION</scope>
    <scope>TISSUE SPECIFICITY</scope>
</reference>
<reference key="20">
    <citation type="journal article" date="2006" name="Science">
        <title>The consensus coding sequences of human breast and colorectal cancers.</title>
        <authorList>
            <person name="Sjoeblom T."/>
            <person name="Jones S."/>
            <person name="Wood L.D."/>
            <person name="Parsons D.W."/>
            <person name="Lin J."/>
            <person name="Barber T.D."/>
            <person name="Mandelker D."/>
            <person name="Leary R.J."/>
            <person name="Ptak J."/>
            <person name="Silliman N."/>
            <person name="Szabo S."/>
            <person name="Buckhaults P."/>
            <person name="Farrell C."/>
            <person name="Meeh P."/>
            <person name="Markowitz S.D."/>
            <person name="Willis J."/>
            <person name="Dawson D."/>
            <person name="Willson J.K.V."/>
            <person name="Gazdar A.F."/>
            <person name="Hartigan J."/>
            <person name="Wu L."/>
            <person name="Liu C."/>
            <person name="Parmigiani G."/>
            <person name="Park B.H."/>
            <person name="Bachman K.E."/>
            <person name="Papadopoulos N."/>
            <person name="Vogelstein B."/>
            <person name="Kinzler K.W."/>
            <person name="Velculescu V.E."/>
        </authorList>
    </citation>
    <scope>VARIANT [LARGE SCALE ANALYSIS] GLN-204</scope>
</reference>
<reference key="21">
    <citation type="journal article" date="2016" name="Haematologica">
        <title>Whole exome sequencing identifies genetic variants in inherited thrombocytopenia with secondary qualitative function defects.</title>
        <authorList>
            <consortium name="UK GAPP Study Group"/>
            <person name="Johnson B."/>
            <person name="Lowe G.C."/>
            <person name="Futterer J."/>
            <person name="Lordkipanidze M."/>
            <person name="MacDonald D."/>
            <person name="Simpson M.A."/>
            <person name="Sanchez-Guiu I."/>
            <person name="Drake S."/>
            <person name="Bem D."/>
            <person name="Leo V."/>
            <person name="Fletcher S.J."/>
            <person name="Dawood B."/>
            <person name="Rivera J."/>
            <person name="Allsup D."/>
            <person name="Biss T."/>
            <person name="Bolton-Maggs P.H."/>
            <person name="Collins P."/>
            <person name="Curry N."/>
            <person name="Grimley C."/>
            <person name="James B."/>
            <person name="Makris M."/>
            <person name="Motwani J."/>
            <person name="Pavord S."/>
            <person name="Talks K."/>
            <person name="Thachil J."/>
            <person name="Wilde J."/>
            <person name="Williams M."/>
            <person name="Harrison P."/>
            <person name="Gissen P."/>
            <person name="Mundell S."/>
            <person name="Mumford A."/>
            <person name="Daly M.E."/>
            <person name="Watson S.P."/>
            <person name="Morgan N.V."/>
        </authorList>
    </citation>
    <scope>VARIANT BDPLT25 VAL-147</scope>
</reference>
<reference key="22">
    <citation type="journal article" date="2022" name="J. Thromb. Haemost.">
        <title>Rare missense variants in Tropomyosin-4 (TPM4) are associated with platelet dysfunction, cytoskeletal defects, and excessive bleeding.</title>
        <authorList>
            <consortium name="UK GAPP Study Group"/>
            <person name="Stapley R.J."/>
            <person name="Poulter N.S."/>
            <person name="Khan A.O."/>
            <person name="Smith C.W."/>
            <person name="Bignell P."/>
            <person name="Fratter C."/>
            <person name="Lester W."/>
            <person name="Lowe G."/>
            <person name="Morgan N.V."/>
        </authorList>
    </citation>
    <scope>VARIANT BDPLT25 CYS-146</scope>
</reference>
<reference key="23">
    <citation type="journal article" date="2022" name="J. Thromb. Haemost.">
        <title>Corrigendum.</title>
        <authorList>
            <consortium name="UK GAPP Study Group"/>
            <person name="Stapley R.J."/>
            <person name="Poulter N.S."/>
            <person name="Khan A.O."/>
            <person name="Smith C.W."/>
            <person name="Bignell P."/>
            <person name="Fratter C."/>
            <person name="Lester W."/>
            <person name="Lowe G."/>
            <person name="Morgan N.V."/>
        </authorList>
    </citation>
    <scope>ERRATUM OF PUBMED:34758189</scope>
</reference>
<reference key="24">
    <citation type="journal article" date="2022" name="J. Thromb. Haemost.">
        <title>A novel nonsense variant in TPM4 caused dominant macrothrombocytopenia, mild bleeding tendency and disrupted cytoskeleton remodeling.</title>
        <authorList>
            <person name="Marin-Quilez A."/>
            <person name="Vuelta E."/>
            <person name="Diaz-Ajenjo L."/>
            <person name="Fernandez-Infante C."/>
            <person name="Garcia-Tunon I."/>
            <person name="Benito R."/>
            <person name="Palma-Barqueros V."/>
            <person name="Hernandez-Rivas J.M."/>
            <person name="Gonzalez-Porras J.R."/>
            <person name="Rivera J."/>
            <person name="Bastida J.M."/>
        </authorList>
    </citation>
    <scope>VARIANT BDPLT25 108-GLN--ILE-248 DEL</scope>
    <scope>CHARACTERIZATION OF VARIANT BDPLT25 108-GLN--ILE-248 DEL</scope>
    <scope>FUNCTION</scope>
</reference>
<gene>
    <name type="primary">TPM4</name>
</gene>
<comment type="function">
    <text evidence="3 7 9 11">Binds to actin filaments in muscle and non-muscle cells. Plays a central role, in association with the troponin complex, in the calcium dependent regulation of vertebrate striated muscle contraction. Smooth muscle contraction is regulated by interaction with caldesmon. In non-muscle cells is implicated in stabilizing cytoskeleton actin filaments (By similarity). Binds calcium (PubMed:1836432). Plays a role in platelet biogenesis.</text>
</comment>
<comment type="subunit">
    <text evidence="2">Homodimer. Heterodimer of an alpha (TPM1, TPM3 or TPM4) and a beta (TPM2) chain.</text>
</comment>
<comment type="interaction">
    <interactant intactId="EBI-1642100">
        <id>P67936</id>
    </interactant>
    <interactant intactId="EBI-17181882">
        <id>O75564-2</id>
        <label>JRK</label>
    </interactant>
    <organismsDiffer>false</organismsDiffer>
    <experiments>3</experiments>
</comment>
<comment type="interaction">
    <interactant intactId="EBI-1642100">
        <id>P67936</id>
    </interactant>
    <interactant intactId="EBI-79165">
        <id>Q9NRD5</id>
        <label>PICK1</label>
    </interactant>
    <organismsDiffer>false</organismsDiffer>
    <experiments>3</experiments>
</comment>
<comment type="interaction">
    <interactant intactId="EBI-1642100">
        <id>P67936</id>
    </interactant>
    <interactant intactId="EBI-296723">
        <id>O95295</id>
        <label>SNAPIN</label>
    </interactant>
    <organismsDiffer>false</organismsDiffer>
    <experiments>3</experiments>
</comment>
<comment type="interaction">
    <interactant intactId="EBI-1642100">
        <id>P67936</id>
    </interactant>
    <interactant intactId="EBI-355607">
        <id>P06753</id>
        <label>TPM3</label>
    </interactant>
    <organismsDiffer>false</organismsDiffer>
    <experiments>5</experiments>
</comment>
<comment type="subcellular location">
    <subcellularLocation>
        <location evidence="3">Cytoplasm</location>
        <location evidence="3">Cytoskeleton</location>
    </subcellularLocation>
    <text evidence="3">Associates with F-actin stress fibers.</text>
</comment>
<comment type="alternative products">
    <event type="alternative splicing"/>
    <isoform>
        <id>P67936-1</id>
        <id>P07226-1</id>
        <name>1</name>
        <sequence type="displayed"/>
    </isoform>
    <isoform>
        <id>P67936-2</id>
        <id>P07226-2</id>
        <name>2</name>
        <sequence type="described" ref="VSP_006611"/>
    </isoform>
</comment>
<comment type="tissue specificity">
    <text evidence="7 9">Detected in cardiac tissue and platelets, the form found in cardiac tissue is a higher molecular weight than the form found in platelets. Expressed at higher levels in the platelets of hypertensive patients with cardiac hypertrophy than in the platelets of hypertensive patients without cardiac hypertrophy (at protein level).</text>
</comment>
<comment type="domain">
    <text>The molecule is in a coiled coil structure that is formed by 2 polypeptide chains. The sequence exhibits a prominent seven-residues periodicity.</text>
</comment>
<comment type="disease" evidence="8 9 10 11">
    <disease id="DI-06751">
        <name>Bleeding disorder, platelet-type, 25</name>
        <acronym>BDPLT25</acronym>
        <description>An autosomal dominant disorder characterized by increased bleeding tendency due to decreased or dysfunctional platelets. Platelet morphologic and functional defects are variable. Some individuals have normal numbers of enlarged platelets.</description>
        <dbReference type="MIM" id="620486"/>
    </disease>
    <text>The disease is caused by variants affecting the gene represented in this entry.</text>
</comment>
<comment type="similarity">
    <text evidence="14">Belongs to the tropomyosin family.</text>
</comment>
<comment type="online information" name="Atlas of Genetics and Cytogenetics in Oncology and Haematology">
    <link uri="https://atlasgeneticsoncology.org/gene/359/TPM4"/>
</comment>
<proteinExistence type="evidence at protein level"/>
<protein>
    <recommendedName>
        <fullName>Tropomyosin alpha-4 chain</fullName>
    </recommendedName>
    <alternativeName>
        <fullName>TM30p1</fullName>
    </alternativeName>
    <alternativeName>
        <fullName>Tropomyosin-4</fullName>
    </alternativeName>
</protein>
<accession>P67936</accession>
<accession>P07226</accession>
<accession>Q15659</accession>
<accession>Q5U0D9</accession>
<accession>Q9BU85</accession>
<accession>Q9H8Q3</accession>
<accession>Q9UCS1</accession>
<accession>Q9UCS2</accession>
<accession>Q9UCS3</accession>
<accession>Q9UCS4</accession>